<accession>B1I6M4</accession>
<dbReference type="EC" id="2.1.2.1" evidence="1"/>
<dbReference type="EMBL" id="CP000860">
    <property type="protein sequence ID" value="ACA60634.1"/>
    <property type="molecule type" value="Genomic_DNA"/>
</dbReference>
<dbReference type="RefSeq" id="WP_012303209.1">
    <property type="nucleotide sequence ID" value="NC_010424.1"/>
</dbReference>
<dbReference type="SMR" id="B1I6M4"/>
<dbReference type="STRING" id="477974.Daud_2147"/>
<dbReference type="KEGG" id="dau:Daud_2147"/>
<dbReference type="eggNOG" id="COG0112">
    <property type="taxonomic scope" value="Bacteria"/>
</dbReference>
<dbReference type="HOGENOM" id="CLU_022477_2_1_9"/>
<dbReference type="OrthoDB" id="9803846at2"/>
<dbReference type="UniPathway" id="UPA00193"/>
<dbReference type="UniPathway" id="UPA00288">
    <property type="reaction ID" value="UER01023"/>
</dbReference>
<dbReference type="Proteomes" id="UP000008544">
    <property type="component" value="Chromosome"/>
</dbReference>
<dbReference type="GO" id="GO:0005829">
    <property type="term" value="C:cytosol"/>
    <property type="evidence" value="ECO:0007669"/>
    <property type="project" value="TreeGrafter"/>
</dbReference>
<dbReference type="GO" id="GO:0004372">
    <property type="term" value="F:glycine hydroxymethyltransferase activity"/>
    <property type="evidence" value="ECO:0007669"/>
    <property type="project" value="UniProtKB-UniRule"/>
</dbReference>
<dbReference type="GO" id="GO:0030170">
    <property type="term" value="F:pyridoxal phosphate binding"/>
    <property type="evidence" value="ECO:0007669"/>
    <property type="project" value="UniProtKB-UniRule"/>
</dbReference>
<dbReference type="GO" id="GO:0019264">
    <property type="term" value="P:glycine biosynthetic process from serine"/>
    <property type="evidence" value="ECO:0007669"/>
    <property type="project" value="UniProtKB-UniRule"/>
</dbReference>
<dbReference type="GO" id="GO:0035999">
    <property type="term" value="P:tetrahydrofolate interconversion"/>
    <property type="evidence" value="ECO:0007669"/>
    <property type="project" value="UniProtKB-UniRule"/>
</dbReference>
<dbReference type="CDD" id="cd00378">
    <property type="entry name" value="SHMT"/>
    <property type="match status" value="1"/>
</dbReference>
<dbReference type="FunFam" id="3.40.640.10:FF:000001">
    <property type="entry name" value="Serine hydroxymethyltransferase"/>
    <property type="match status" value="1"/>
</dbReference>
<dbReference type="FunFam" id="3.90.1150.10:FF:000003">
    <property type="entry name" value="Serine hydroxymethyltransferase"/>
    <property type="match status" value="1"/>
</dbReference>
<dbReference type="Gene3D" id="3.90.1150.10">
    <property type="entry name" value="Aspartate Aminotransferase, domain 1"/>
    <property type="match status" value="1"/>
</dbReference>
<dbReference type="Gene3D" id="3.40.640.10">
    <property type="entry name" value="Type I PLP-dependent aspartate aminotransferase-like (Major domain)"/>
    <property type="match status" value="1"/>
</dbReference>
<dbReference type="HAMAP" id="MF_00051">
    <property type="entry name" value="SHMT"/>
    <property type="match status" value="1"/>
</dbReference>
<dbReference type="InterPro" id="IPR015424">
    <property type="entry name" value="PyrdxlP-dep_Trfase"/>
</dbReference>
<dbReference type="InterPro" id="IPR015421">
    <property type="entry name" value="PyrdxlP-dep_Trfase_major"/>
</dbReference>
<dbReference type="InterPro" id="IPR015422">
    <property type="entry name" value="PyrdxlP-dep_Trfase_small"/>
</dbReference>
<dbReference type="InterPro" id="IPR001085">
    <property type="entry name" value="Ser_HO-MeTrfase"/>
</dbReference>
<dbReference type="InterPro" id="IPR049943">
    <property type="entry name" value="Ser_HO-MeTrfase-like"/>
</dbReference>
<dbReference type="InterPro" id="IPR019798">
    <property type="entry name" value="Ser_HO-MeTrfase_PLP_BS"/>
</dbReference>
<dbReference type="InterPro" id="IPR039429">
    <property type="entry name" value="SHMT-like_dom"/>
</dbReference>
<dbReference type="NCBIfam" id="NF000586">
    <property type="entry name" value="PRK00011.1"/>
    <property type="match status" value="1"/>
</dbReference>
<dbReference type="PANTHER" id="PTHR11680">
    <property type="entry name" value="SERINE HYDROXYMETHYLTRANSFERASE"/>
    <property type="match status" value="1"/>
</dbReference>
<dbReference type="PANTHER" id="PTHR11680:SF35">
    <property type="entry name" value="SERINE HYDROXYMETHYLTRANSFERASE 1"/>
    <property type="match status" value="1"/>
</dbReference>
<dbReference type="Pfam" id="PF00464">
    <property type="entry name" value="SHMT"/>
    <property type="match status" value="1"/>
</dbReference>
<dbReference type="PIRSF" id="PIRSF000412">
    <property type="entry name" value="SHMT"/>
    <property type="match status" value="1"/>
</dbReference>
<dbReference type="SUPFAM" id="SSF53383">
    <property type="entry name" value="PLP-dependent transferases"/>
    <property type="match status" value="1"/>
</dbReference>
<dbReference type="PROSITE" id="PS00096">
    <property type="entry name" value="SHMT"/>
    <property type="match status" value="1"/>
</dbReference>
<name>GLYA_DESAP</name>
<organism>
    <name type="scientific">Desulforudis audaxviator (strain MP104C)</name>
    <dbReference type="NCBI Taxonomy" id="477974"/>
    <lineage>
        <taxon>Bacteria</taxon>
        <taxon>Bacillati</taxon>
        <taxon>Bacillota</taxon>
        <taxon>Clostridia</taxon>
        <taxon>Thermoanaerobacterales</taxon>
        <taxon>Candidatus Desulforudaceae</taxon>
        <taxon>Candidatus Desulforudis</taxon>
    </lineage>
</organism>
<proteinExistence type="inferred from homology"/>
<comment type="function">
    <text evidence="1">Catalyzes the reversible interconversion of serine and glycine with tetrahydrofolate (THF) serving as the one-carbon carrier. This reaction serves as the major source of one-carbon groups required for the biosynthesis of purines, thymidylate, methionine, and other important biomolecules. Also exhibits THF-independent aldolase activity toward beta-hydroxyamino acids, producing glycine and aldehydes, via a retro-aldol mechanism.</text>
</comment>
<comment type="catalytic activity">
    <reaction evidence="1">
        <text>(6R)-5,10-methylene-5,6,7,8-tetrahydrofolate + glycine + H2O = (6S)-5,6,7,8-tetrahydrofolate + L-serine</text>
        <dbReference type="Rhea" id="RHEA:15481"/>
        <dbReference type="ChEBI" id="CHEBI:15377"/>
        <dbReference type="ChEBI" id="CHEBI:15636"/>
        <dbReference type="ChEBI" id="CHEBI:33384"/>
        <dbReference type="ChEBI" id="CHEBI:57305"/>
        <dbReference type="ChEBI" id="CHEBI:57453"/>
        <dbReference type="EC" id="2.1.2.1"/>
    </reaction>
</comment>
<comment type="cofactor">
    <cofactor evidence="1">
        <name>pyridoxal 5'-phosphate</name>
        <dbReference type="ChEBI" id="CHEBI:597326"/>
    </cofactor>
</comment>
<comment type="pathway">
    <text evidence="1">One-carbon metabolism; tetrahydrofolate interconversion.</text>
</comment>
<comment type="pathway">
    <text evidence="1">Amino-acid biosynthesis; glycine biosynthesis; glycine from L-serine: step 1/1.</text>
</comment>
<comment type="subunit">
    <text evidence="1">Homodimer.</text>
</comment>
<comment type="subcellular location">
    <subcellularLocation>
        <location evidence="1">Cytoplasm</location>
    </subcellularLocation>
</comment>
<comment type="similarity">
    <text evidence="1">Belongs to the SHMT family.</text>
</comment>
<reference key="1">
    <citation type="submission" date="2007-10" db="EMBL/GenBank/DDBJ databases">
        <title>Complete sequence of chromosome of Desulforudis audaxviator MP104C.</title>
        <authorList>
            <person name="Copeland A."/>
            <person name="Lucas S."/>
            <person name="Lapidus A."/>
            <person name="Barry K."/>
            <person name="Glavina del Rio T."/>
            <person name="Dalin E."/>
            <person name="Tice H."/>
            <person name="Bruce D."/>
            <person name="Pitluck S."/>
            <person name="Lowry S.R."/>
            <person name="Larimer F."/>
            <person name="Land M.L."/>
            <person name="Hauser L."/>
            <person name="Kyrpides N."/>
            <person name="Ivanova N.N."/>
            <person name="Richardson P."/>
        </authorList>
    </citation>
    <scope>NUCLEOTIDE SEQUENCE [LARGE SCALE GENOMIC DNA]</scope>
    <source>
        <strain>MP104C</strain>
    </source>
</reference>
<gene>
    <name evidence="1" type="primary">glyA</name>
    <name type="ordered locus">Daud_2147</name>
</gene>
<evidence type="ECO:0000255" key="1">
    <source>
        <dbReference type="HAMAP-Rule" id="MF_00051"/>
    </source>
</evidence>
<feature type="chain" id="PRO_0000369920" description="Serine hydroxymethyltransferase">
    <location>
        <begin position="1"/>
        <end position="415"/>
    </location>
</feature>
<feature type="binding site" evidence="1">
    <location>
        <position position="120"/>
    </location>
    <ligand>
        <name>(6S)-5,6,7,8-tetrahydrofolate</name>
        <dbReference type="ChEBI" id="CHEBI:57453"/>
    </ligand>
</feature>
<feature type="binding site" evidence="1">
    <location>
        <begin position="124"/>
        <end position="126"/>
    </location>
    <ligand>
        <name>(6S)-5,6,7,8-tetrahydrofolate</name>
        <dbReference type="ChEBI" id="CHEBI:57453"/>
    </ligand>
</feature>
<feature type="site" description="Plays an important role in substrate specificity" evidence="1">
    <location>
        <position position="228"/>
    </location>
</feature>
<feature type="modified residue" description="N6-(pyridoxal phosphate)lysine" evidence="1">
    <location>
        <position position="229"/>
    </location>
</feature>
<protein>
    <recommendedName>
        <fullName evidence="1">Serine hydroxymethyltransferase</fullName>
        <shortName evidence="1">SHMT</shortName>
        <shortName evidence="1">Serine methylase</shortName>
        <ecNumber evidence="1">2.1.2.1</ecNumber>
    </recommendedName>
</protein>
<keyword id="KW-0028">Amino-acid biosynthesis</keyword>
<keyword id="KW-0963">Cytoplasm</keyword>
<keyword id="KW-0554">One-carbon metabolism</keyword>
<keyword id="KW-0663">Pyridoxal phosphate</keyword>
<keyword id="KW-1185">Reference proteome</keyword>
<keyword id="KW-0808">Transferase</keyword>
<sequence length="415" mass="44886">MVWNRSLAETDPEIARAIALEITRQGAKLELIASENFVSRAVLEAQGSVLTNKYAEGYPGARYYGGCEYVDIVESVAIRRAKEIFGAGHANVQPHSGAQANMAAYFAFLEPGDTIMGMRLAHGGHLTHGAKINFSGRYFRYVPYGVEEETGRIDYDRMHAIAREHRPKLIVGGASAYPRELDFARMRAIADDVGALLMIDMAHIAGLIAAGLHMSPVPYADVVTTTTHKTLRGPRGGMILCPEEYAAAIDKAVFPGIQGGPLMHVIAAKAVALGEAQRPEFKTYQEQIVKNARALAQALQERGFELVAGGTDTHLILVDLRNKGLTGAVAEDLLDRVDVTVNKNMVPFDPQPPRVTSGIRIGTPAVTTRGMKEDSMVQIAEVISLTLDHPEEGAVQARAKAIVAELCAAHPFLKL</sequence>